<organism>
    <name type="scientific">Streptococcus pyogenes serotype M3 (strain ATCC BAA-595 / MGAS315)</name>
    <dbReference type="NCBI Taxonomy" id="198466"/>
    <lineage>
        <taxon>Bacteria</taxon>
        <taxon>Bacillati</taxon>
        <taxon>Bacillota</taxon>
        <taxon>Bacilli</taxon>
        <taxon>Lactobacillales</taxon>
        <taxon>Streptococcaceae</taxon>
        <taxon>Streptococcus</taxon>
    </lineage>
</organism>
<reference key="1">
    <citation type="journal article" date="2002" name="Proc. Natl. Acad. Sci. U.S.A.">
        <title>Genome sequence of a serotype M3 strain of group A Streptococcus: phage-encoded toxins, the high-virulence phenotype, and clone emergence.</title>
        <authorList>
            <person name="Beres S.B."/>
            <person name="Sylva G.L."/>
            <person name="Barbian K.D."/>
            <person name="Lei B."/>
            <person name="Hoff J.S."/>
            <person name="Mammarella N.D."/>
            <person name="Liu M.-Y."/>
            <person name="Smoot J.C."/>
            <person name="Porcella S.F."/>
            <person name="Parkins L.D."/>
            <person name="Campbell D.S."/>
            <person name="Smith T.M."/>
            <person name="McCormick J.K."/>
            <person name="Leung D.Y.M."/>
            <person name="Schlievert P.M."/>
            <person name="Musser J.M."/>
        </authorList>
    </citation>
    <scope>NUCLEOTIDE SEQUENCE [LARGE SCALE GENOMIC DNA]</scope>
    <source>
        <strain>ATCC BAA-595 / MGAS315</strain>
    </source>
</reference>
<gene>
    <name evidence="1" type="primary">prfA</name>
    <name type="ordered locus">SpyM3_0799</name>
</gene>
<dbReference type="EMBL" id="AE014074">
    <property type="protein sequence ID" value="AAM79406.1"/>
    <property type="molecule type" value="Genomic_DNA"/>
</dbReference>
<dbReference type="RefSeq" id="WP_011054486.1">
    <property type="nucleotide sequence ID" value="NC_004070.1"/>
</dbReference>
<dbReference type="SMR" id="P0DD94"/>
<dbReference type="GeneID" id="69900872"/>
<dbReference type="KEGG" id="spg:SpyM3_0799"/>
<dbReference type="HOGENOM" id="CLU_036856_0_1_9"/>
<dbReference type="Proteomes" id="UP000000564">
    <property type="component" value="Chromosome"/>
</dbReference>
<dbReference type="GO" id="GO:0005737">
    <property type="term" value="C:cytoplasm"/>
    <property type="evidence" value="ECO:0007669"/>
    <property type="project" value="UniProtKB-SubCell"/>
</dbReference>
<dbReference type="GO" id="GO:0016149">
    <property type="term" value="F:translation release factor activity, codon specific"/>
    <property type="evidence" value="ECO:0007669"/>
    <property type="project" value="UniProtKB-UniRule"/>
</dbReference>
<dbReference type="FunFam" id="3.30.160.20:FF:000027">
    <property type="entry name" value="Peptide chain release factor 1"/>
    <property type="match status" value="1"/>
</dbReference>
<dbReference type="FunFam" id="3.30.70.1660:FF:000002">
    <property type="entry name" value="Peptide chain release factor 1"/>
    <property type="match status" value="1"/>
</dbReference>
<dbReference type="FunFam" id="3.30.70.1660:FF:000004">
    <property type="entry name" value="Peptide chain release factor 1"/>
    <property type="match status" value="1"/>
</dbReference>
<dbReference type="Gene3D" id="3.30.160.20">
    <property type="match status" value="1"/>
</dbReference>
<dbReference type="Gene3D" id="3.30.70.1660">
    <property type="match status" value="2"/>
</dbReference>
<dbReference type="Gene3D" id="6.10.140.1950">
    <property type="match status" value="1"/>
</dbReference>
<dbReference type="HAMAP" id="MF_00093">
    <property type="entry name" value="Rel_fac_1"/>
    <property type="match status" value="1"/>
</dbReference>
<dbReference type="InterPro" id="IPR005139">
    <property type="entry name" value="PCRF"/>
</dbReference>
<dbReference type="InterPro" id="IPR000352">
    <property type="entry name" value="Pep_chain_release_fac_I"/>
</dbReference>
<dbReference type="InterPro" id="IPR045853">
    <property type="entry name" value="Pep_chain_release_fac_I_sf"/>
</dbReference>
<dbReference type="InterPro" id="IPR050057">
    <property type="entry name" value="Prokaryotic/Mito_RF"/>
</dbReference>
<dbReference type="InterPro" id="IPR004373">
    <property type="entry name" value="RF-1"/>
</dbReference>
<dbReference type="NCBIfam" id="TIGR00019">
    <property type="entry name" value="prfA"/>
    <property type="match status" value="1"/>
</dbReference>
<dbReference type="NCBIfam" id="NF001859">
    <property type="entry name" value="PRK00591.1"/>
    <property type="match status" value="1"/>
</dbReference>
<dbReference type="PANTHER" id="PTHR43804">
    <property type="entry name" value="LD18447P"/>
    <property type="match status" value="1"/>
</dbReference>
<dbReference type="PANTHER" id="PTHR43804:SF7">
    <property type="entry name" value="LD18447P"/>
    <property type="match status" value="1"/>
</dbReference>
<dbReference type="Pfam" id="PF03462">
    <property type="entry name" value="PCRF"/>
    <property type="match status" value="1"/>
</dbReference>
<dbReference type="Pfam" id="PF00472">
    <property type="entry name" value="RF-1"/>
    <property type="match status" value="1"/>
</dbReference>
<dbReference type="SMART" id="SM00937">
    <property type="entry name" value="PCRF"/>
    <property type="match status" value="1"/>
</dbReference>
<dbReference type="SUPFAM" id="SSF75620">
    <property type="entry name" value="Release factor"/>
    <property type="match status" value="1"/>
</dbReference>
<dbReference type="PROSITE" id="PS00745">
    <property type="entry name" value="RF_PROK_I"/>
    <property type="match status" value="1"/>
</dbReference>
<name>RF1_STRP3</name>
<sequence length="359" mass="40583">MNIYDQLQAVEDRYEELGELLSDPDVVSDTKRFMELSREEANTRETVTAYREYKQVIQTISDAEEMIKDASGDPELEEMAKEELKESKAAKEEYEEKLKILLLPKDPNDDKNIILEIRGAAGGDEAALFAGDLLTMYQKYAETQGWRFEVMESSVNGVGGIKEVVAMVSGQSVYSKLKYESGAHRVQRVPVTESQGRVHTSTATVLVMPEVEEVEYDIDPKDLRIDIYHASGAGGQNVNKVATAVRMVHIPTGIKVEMQEERTQQKNRDKAMKIIRARVADHFAQIAQDEQDAERKSTVGTGDRSERIRTYNFPQNRVTDHRIGLTLQKLDTILSGKMDEVIDALVMYDQTKKLESLNN</sequence>
<evidence type="ECO:0000255" key="1">
    <source>
        <dbReference type="HAMAP-Rule" id="MF_00093"/>
    </source>
</evidence>
<accession>P0DD94</accession>
<accession>Q8K7I2</accession>
<feature type="chain" id="PRO_0000177755" description="Peptide chain release factor 1">
    <location>
        <begin position="1"/>
        <end position="359"/>
    </location>
</feature>
<feature type="modified residue" description="N5-methylglutamine" evidence="1">
    <location>
        <position position="236"/>
    </location>
</feature>
<proteinExistence type="inferred from homology"/>
<keyword id="KW-0963">Cytoplasm</keyword>
<keyword id="KW-0488">Methylation</keyword>
<keyword id="KW-0648">Protein biosynthesis</keyword>
<comment type="function">
    <text evidence="1">Peptide chain release factor 1 directs the termination of translation in response to the peptide chain termination codons UAG and UAA.</text>
</comment>
<comment type="subcellular location">
    <subcellularLocation>
        <location evidence="1">Cytoplasm</location>
    </subcellularLocation>
</comment>
<comment type="PTM">
    <text evidence="1">Methylated by PrmC. Methylation increases the termination efficiency of RF1.</text>
</comment>
<comment type="similarity">
    <text evidence="1">Belongs to the prokaryotic/mitochondrial release factor family.</text>
</comment>
<protein>
    <recommendedName>
        <fullName evidence="1">Peptide chain release factor 1</fullName>
        <shortName evidence="1">RF-1</shortName>
    </recommendedName>
</protein>